<gene>
    <name evidence="1" type="primary">recA</name>
    <name type="ordered locus">LMHCC_1171</name>
</gene>
<evidence type="ECO:0000255" key="1">
    <source>
        <dbReference type="HAMAP-Rule" id="MF_00268"/>
    </source>
</evidence>
<evidence type="ECO:0000256" key="2">
    <source>
        <dbReference type="SAM" id="MobiDB-lite"/>
    </source>
</evidence>
<name>RECA_LISMH</name>
<reference key="1">
    <citation type="journal article" date="2011" name="J. Bacteriol.">
        <title>Genome sequence of lineage III Listeria monocytogenes strain HCC23.</title>
        <authorList>
            <person name="Steele C.L."/>
            <person name="Donaldson J.R."/>
            <person name="Paul D."/>
            <person name="Banes M.M."/>
            <person name="Arick T."/>
            <person name="Bridges S.M."/>
            <person name="Lawrence M.L."/>
        </authorList>
    </citation>
    <scope>NUCLEOTIDE SEQUENCE [LARGE SCALE GENOMIC DNA]</scope>
    <source>
        <strain>HCC23</strain>
    </source>
</reference>
<proteinExistence type="inferred from homology"/>
<protein>
    <recommendedName>
        <fullName evidence="1">Protein RecA</fullName>
    </recommendedName>
    <alternativeName>
        <fullName evidence="1">Recombinase A</fullName>
    </alternativeName>
</protein>
<accession>B8DFS9</accession>
<dbReference type="EMBL" id="CP001175">
    <property type="protein sequence ID" value="ACK39519.1"/>
    <property type="molecule type" value="Genomic_DNA"/>
</dbReference>
<dbReference type="RefSeq" id="WP_003725961.1">
    <property type="nucleotide sequence ID" value="NC_011660.1"/>
</dbReference>
<dbReference type="SMR" id="B8DFS9"/>
<dbReference type="KEGG" id="lmh:LMHCC_1171"/>
<dbReference type="HOGENOM" id="CLU_040469_3_2_9"/>
<dbReference type="GO" id="GO:0005829">
    <property type="term" value="C:cytosol"/>
    <property type="evidence" value="ECO:0007669"/>
    <property type="project" value="TreeGrafter"/>
</dbReference>
<dbReference type="GO" id="GO:0005524">
    <property type="term" value="F:ATP binding"/>
    <property type="evidence" value="ECO:0007669"/>
    <property type="project" value="UniProtKB-UniRule"/>
</dbReference>
<dbReference type="GO" id="GO:0016887">
    <property type="term" value="F:ATP hydrolysis activity"/>
    <property type="evidence" value="ECO:0007669"/>
    <property type="project" value="InterPro"/>
</dbReference>
<dbReference type="GO" id="GO:0140664">
    <property type="term" value="F:ATP-dependent DNA damage sensor activity"/>
    <property type="evidence" value="ECO:0007669"/>
    <property type="project" value="InterPro"/>
</dbReference>
<dbReference type="GO" id="GO:0003684">
    <property type="term" value="F:damaged DNA binding"/>
    <property type="evidence" value="ECO:0007669"/>
    <property type="project" value="UniProtKB-UniRule"/>
</dbReference>
<dbReference type="GO" id="GO:0003697">
    <property type="term" value="F:single-stranded DNA binding"/>
    <property type="evidence" value="ECO:0007669"/>
    <property type="project" value="UniProtKB-UniRule"/>
</dbReference>
<dbReference type="GO" id="GO:0006310">
    <property type="term" value="P:DNA recombination"/>
    <property type="evidence" value="ECO:0007669"/>
    <property type="project" value="UniProtKB-UniRule"/>
</dbReference>
<dbReference type="GO" id="GO:0006281">
    <property type="term" value="P:DNA repair"/>
    <property type="evidence" value="ECO:0007669"/>
    <property type="project" value="UniProtKB-UniRule"/>
</dbReference>
<dbReference type="GO" id="GO:0009432">
    <property type="term" value="P:SOS response"/>
    <property type="evidence" value="ECO:0007669"/>
    <property type="project" value="UniProtKB-UniRule"/>
</dbReference>
<dbReference type="CDD" id="cd00983">
    <property type="entry name" value="RecA"/>
    <property type="match status" value="1"/>
</dbReference>
<dbReference type="FunFam" id="3.40.50.300:FF:000087">
    <property type="entry name" value="Recombinase RecA"/>
    <property type="match status" value="1"/>
</dbReference>
<dbReference type="Gene3D" id="3.40.50.300">
    <property type="entry name" value="P-loop containing nucleotide triphosphate hydrolases"/>
    <property type="match status" value="1"/>
</dbReference>
<dbReference type="HAMAP" id="MF_00268">
    <property type="entry name" value="RecA"/>
    <property type="match status" value="1"/>
</dbReference>
<dbReference type="InterPro" id="IPR003593">
    <property type="entry name" value="AAA+_ATPase"/>
</dbReference>
<dbReference type="InterPro" id="IPR013765">
    <property type="entry name" value="DNA_recomb/repair_RecA"/>
</dbReference>
<dbReference type="InterPro" id="IPR020584">
    <property type="entry name" value="DNA_recomb/repair_RecA_CS"/>
</dbReference>
<dbReference type="InterPro" id="IPR027417">
    <property type="entry name" value="P-loop_NTPase"/>
</dbReference>
<dbReference type="InterPro" id="IPR049261">
    <property type="entry name" value="RecA-like_C"/>
</dbReference>
<dbReference type="InterPro" id="IPR049428">
    <property type="entry name" value="RecA-like_N"/>
</dbReference>
<dbReference type="InterPro" id="IPR020588">
    <property type="entry name" value="RecA_ATP-bd"/>
</dbReference>
<dbReference type="InterPro" id="IPR023400">
    <property type="entry name" value="RecA_C_sf"/>
</dbReference>
<dbReference type="InterPro" id="IPR020587">
    <property type="entry name" value="RecA_monomer-monomer_interface"/>
</dbReference>
<dbReference type="NCBIfam" id="TIGR02012">
    <property type="entry name" value="tigrfam_recA"/>
    <property type="match status" value="1"/>
</dbReference>
<dbReference type="PANTHER" id="PTHR45900:SF1">
    <property type="entry name" value="MITOCHONDRIAL DNA REPAIR PROTEIN RECA HOMOLOG-RELATED"/>
    <property type="match status" value="1"/>
</dbReference>
<dbReference type="PANTHER" id="PTHR45900">
    <property type="entry name" value="RECA"/>
    <property type="match status" value="1"/>
</dbReference>
<dbReference type="Pfam" id="PF00154">
    <property type="entry name" value="RecA"/>
    <property type="match status" value="1"/>
</dbReference>
<dbReference type="Pfam" id="PF21096">
    <property type="entry name" value="RecA_C"/>
    <property type="match status" value="1"/>
</dbReference>
<dbReference type="PRINTS" id="PR00142">
    <property type="entry name" value="RECA"/>
</dbReference>
<dbReference type="SMART" id="SM00382">
    <property type="entry name" value="AAA"/>
    <property type="match status" value="1"/>
</dbReference>
<dbReference type="SUPFAM" id="SSF52540">
    <property type="entry name" value="P-loop containing nucleoside triphosphate hydrolases"/>
    <property type="match status" value="1"/>
</dbReference>
<dbReference type="SUPFAM" id="SSF54752">
    <property type="entry name" value="RecA protein, C-terminal domain"/>
    <property type="match status" value="1"/>
</dbReference>
<dbReference type="PROSITE" id="PS00321">
    <property type="entry name" value="RECA_1"/>
    <property type="match status" value="1"/>
</dbReference>
<dbReference type="PROSITE" id="PS50162">
    <property type="entry name" value="RECA_2"/>
    <property type="match status" value="1"/>
</dbReference>
<dbReference type="PROSITE" id="PS50163">
    <property type="entry name" value="RECA_3"/>
    <property type="match status" value="1"/>
</dbReference>
<keyword id="KW-0067">ATP-binding</keyword>
<keyword id="KW-0963">Cytoplasm</keyword>
<keyword id="KW-0227">DNA damage</keyword>
<keyword id="KW-0233">DNA recombination</keyword>
<keyword id="KW-0234">DNA repair</keyword>
<keyword id="KW-0238">DNA-binding</keyword>
<keyword id="KW-0547">Nucleotide-binding</keyword>
<keyword id="KW-0742">SOS response</keyword>
<sequence>MNDRQAALDQALKQIEKQFGKGSIMKLGEHSDQNISTISSGSLALDIALGVGGYPRGRIIEVYGPESSGKTTVALHAIAEVQAQGGTAAFIDAEHALDPAYAKNLGVNIDELLLSQPDTGEQALEIAEALVRSGAVDMLVIDSVAALVPRAEIEGEMGDAHVGLQARLMSQALRKLSGVINKSKTIAIFINQIREKVGVMFGNPEITPGGRALKFYSTVRLEVRRAEQLKQGTDVMGNKTKIKVVKNKVAPPFRIAEVDIMYGEGISREGELVDMAAEVDVINKSGSWYSYKEERIGQGRENAKQYLKEHTDIRDEISKRVREEYEIDGSNKEPLDEGEETLSLLDDE</sequence>
<feature type="chain" id="PRO_1000193316" description="Protein RecA">
    <location>
        <begin position="1"/>
        <end position="348"/>
    </location>
</feature>
<feature type="region of interest" description="Disordered" evidence="2">
    <location>
        <begin position="325"/>
        <end position="348"/>
    </location>
</feature>
<feature type="compositionally biased region" description="Basic and acidic residues" evidence="2">
    <location>
        <begin position="325"/>
        <end position="335"/>
    </location>
</feature>
<feature type="compositionally biased region" description="Acidic residues" evidence="2">
    <location>
        <begin position="336"/>
        <end position="348"/>
    </location>
</feature>
<feature type="binding site" evidence="1">
    <location>
        <begin position="64"/>
        <end position="71"/>
    </location>
    <ligand>
        <name>ATP</name>
        <dbReference type="ChEBI" id="CHEBI:30616"/>
    </ligand>
</feature>
<organism>
    <name type="scientific">Listeria monocytogenes serotype 4a (strain HCC23)</name>
    <dbReference type="NCBI Taxonomy" id="552536"/>
    <lineage>
        <taxon>Bacteria</taxon>
        <taxon>Bacillati</taxon>
        <taxon>Bacillota</taxon>
        <taxon>Bacilli</taxon>
        <taxon>Bacillales</taxon>
        <taxon>Listeriaceae</taxon>
        <taxon>Listeria</taxon>
    </lineage>
</organism>
<comment type="function">
    <text evidence="1">Can catalyze the hydrolysis of ATP in the presence of single-stranded DNA, the ATP-dependent uptake of single-stranded DNA by duplex DNA, and the ATP-dependent hybridization of homologous single-stranded DNAs. It interacts with LexA causing its activation and leading to its autocatalytic cleavage.</text>
</comment>
<comment type="subcellular location">
    <subcellularLocation>
        <location evidence="1">Cytoplasm</location>
    </subcellularLocation>
</comment>
<comment type="similarity">
    <text evidence="1">Belongs to the RecA family.</text>
</comment>